<proteinExistence type="evidence at protein level"/>
<reference key="1">
    <citation type="journal article" date="1994" name="Yeast">
        <title>A 21.7 kb DNA segment on the left arm of yeast chromosome XIV carries WHI3, GCR2, SPX18, SPX19, an homologue to the heat shock gene SSB1 and 8 new open reading frames of unknown function.</title>
        <authorList>
            <person name="Jonniaux J.-L."/>
            <person name="Coster F."/>
            <person name="Purnelle B."/>
            <person name="Goffeau A."/>
        </authorList>
    </citation>
    <scope>NUCLEOTIDE SEQUENCE [GENOMIC DNA]</scope>
    <source>
        <strain>ATCC 96604 / S288c / FY1679</strain>
    </source>
</reference>
<reference key="2">
    <citation type="journal article" date="1997" name="Nature">
        <title>The nucleotide sequence of Saccharomyces cerevisiae chromosome XIV and its evolutionary implications.</title>
        <authorList>
            <person name="Philippsen P."/>
            <person name="Kleine K."/>
            <person name="Poehlmann R."/>
            <person name="Duesterhoeft A."/>
            <person name="Hamberg K."/>
            <person name="Hegemann J.H."/>
            <person name="Obermaier B."/>
            <person name="Urrestarazu L.A."/>
            <person name="Aert R."/>
            <person name="Albermann K."/>
            <person name="Altmann R."/>
            <person name="Andre B."/>
            <person name="Baladron V."/>
            <person name="Ballesta J.P.G."/>
            <person name="Becam A.-M."/>
            <person name="Beinhauer J.D."/>
            <person name="Boskovic J."/>
            <person name="Buitrago M.J."/>
            <person name="Bussereau F."/>
            <person name="Coster F."/>
            <person name="Crouzet M."/>
            <person name="D'Angelo M."/>
            <person name="Dal Pero F."/>
            <person name="De Antoni A."/>
            <person name="del Rey F."/>
            <person name="Doignon F."/>
            <person name="Domdey H."/>
            <person name="Dubois E."/>
            <person name="Fiedler T.A."/>
            <person name="Fleig U."/>
            <person name="Floeth M."/>
            <person name="Fritz C."/>
            <person name="Gaillardin C."/>
            <person name="Garcia-Cantalejo J.M."/>
            <person name="Glansdorff N."/>
            <person name="Goffeau A."/>
            <person name="Gueldener U."/>
            <person name="Herbert C.J."/>
            <person name="Heumann K."/>
            <person name="Heuss-Neitzel D."/>
            <person name="Hilbert H."/>
            <person name="Hinni K."/>
            <person name="Iraqui Houssaini I."/>
            <person name="Jacquet M."/>
            <person name="Jimenez A."/>
            <person name="Jonniaux J.-L."/>
            <person name="Karpfinger-Hartl L."/>
            <person name="Lanfranchi G."/>
            <person name="Lepingle A."/>
            <person name="Levesque H."/>
            <person name="Lyck R."/>
            <person name="Maftahi M."/>
            <person name="Mallet L."/>
            <person name="Maurer C.T.C."/>
            <person name="Messenguy F."/>
            <person name="Mewes H.-W."/>
            <person name="Moestl D."/>
            <person name="Nasr F."/>
            <person name="Nicaud J.-M."/>
            <person name="Niedenthal R.K."/>
            <person name="Pandolfo D."/>
            <person name="Pierard A."/>
            <person name="Piravandi E."/>
            <person name="Planta R.J."/>
            <person name="Pohl T.M."/>
            <person name="Purnelle B."/>
            <person name="Rebischung C."/>
            <person name="Remacha M.A."/>
            <person name="Revuelta J.L."/>
            <person name="Rinke M."/>
            <person name="Saiz J.E."/>
            <person name="Sartorello F."/>
            <person name="Scherens B."/>
            <person name="Sen-Gupta M."/>
            <person name="Soler-Mira A."/>
            <person name="Urbanus J.H.M."/>
            <person name="Valle G."/>
            <person name="Van Dyck L."/>
            <person name="Verhasselt P."/>
            <person name="Vierendeels F."/>
            <person name="Vissers S."/>
            <person name="Voet M."/>
            <person name="Volckaert G."/>
            <person name="Wach A."/>
            <person name="Wambutt R."/>
            <person name="Wedler H."/>
            <person name="Zollner A."/>
            <person name="Hani J."/>
        </authorList>
    </citation>
    <scope>NUCLEOTIDE SEQUENCE [LARGE SCALE GENOMIC DNA]</scope>
    <source>
        <strain>ATCC 204508 / S288c</strain>
    </source>
</reference>
<reference key="3">
    <citation type="journal article" date="2014" name="G3 (Bethesda)">
        <title>The reference genome sequence of Saccharomyces cerevisiae: Then and now.</title>
        <authorList>
            <person name="Engel S.R."/>
            <person name="Dietrich F.S."/>
            <person name="Fisk D.G."/>
            <person name="Binkley G."/>
            <person name="Balakrishnan R."/>
            <person name="Costanzo M.C."/>
            <person name="Dwight S.S."/>
            <person name="Hitz B.C."/>
            <person name="Karra K."/>
            <person name="Nash R.S."/>
            <person name="Weng S."/>
            <person name="Wong E.D."/>
            <person name="Lloyd P."/>
            <person name="Skrzypek M.S."/>
            <person name="Miyasato S.R."/>
            <person name="Simison M."/>
            <person name="Cherry J.M."/>
        </authorList>
    </citation>
    <scope>GENOME REANNOTATION</scope>
    <source>
        <strain>ATCC 204508 / S288c</strain>
    </source>
</reference>
<reference key="4">
    <citation type="journal article" date="2002" name="Mol. Cell. Biol.">
        <title>The Sur7p family defines novel cortical domains in Saccharomyces cerevisiae, affects sphingolipid metabolism, and is involved in sporulation.</title>
        <authorList>
            <person name="Young M.E."/>
            <person name="Karpova T.S."/>
            <person name="Bruegger B."/>
            <person name="Moschenross D.M."/>
            <person name="Wang G.K."/>
            <person name="Schneiter R."/>
            <person name="Wieland F.T."/>
            <person name="Cooper J.A."/>
        </authorList>
    </citation>
    <scope>FUNCTION</scope>
    <scope>SUBCELLULAR LOCATION</scope>
</reference>
<reference key="5">
    <citation type="journal article" date="2003" name="Nature">
        <title>Global analysis of protein localization in budding yeast.</title>
        <authorList>
            <person name="Huh W.-K."/>
            <person name="Falvo J.V."/>
            <person name="Gerke L.C."/>
            <person name="Carroll A.S."/>
            <person name="Howson R.W."/>
            <person name="Weissman J.S."/>
            <person name="O'Shea E.K."/>
        </authorList>
    </citation>
    <scope>SUBCELLULAR LOCATION [LARGE SCALE ANALYSIS]</scope>
</reference>
<reference key="6">
    <citation type="journal article" date="2006" name="Proc. Natl. Acad. Sci. U.S.A.">
        <title>A global topology map of the Saccharomyces cerevisiae membrane proteome.</title>
        <authorList>
            <person name="Kim H."/>
            <person name="Melen K."/>
            <person name="Oesterberg M."/>
            <person name="von Heijne G."/>
        </authorList>
    </citation>
    <scope>TOPOLOGY [LARGE SCALE ANALYSIS]</scope>
    <source>
        <strain>ATCC 208353 / W303-1A</strain>
    </source>
</reference>
<sequence length="301" mass="34081">MSYKKFVYFINLFFLLGATLLTFFLILAGGRTTGVLKNFYWFQASTSGFNSAPSVTRWYNYNWCGWESRGIAVNCSSKMAAQPFSPRDNFGSSPLMPSTFLNNRNAYYYLSRVGWAMLLIGLFFLLITLVSVIASLIRYNRRTAALATAMSWITLFFITLSACLYTGCYAKAVKAFHHENRDARLGPKNFGLIWTTVFLLIVNAICCTIMVATHKRNEYIYDRSFASTKTVDSQTPTPVPTNGGIPSSVPVTEVQQSQSHQNHRFFKKLRTKKRTVTSAGDEPDRVQEERVYTEQNVPVVS</sequence>
<evidence type="ECO:0000255" key="1"/>
<evidence type="ECO:0000256" key="2">
    <source>
        <dbReference type="SAM" id="MobiDB-lite"/>
    </source>
</evidence>
<evidence type="ECO:0000269" key="3">
    <source>
    </source>
</evidence>
<evidence type="ECO:0000269" key="4">
    <source>
    </source>
</evidence>
<evidence type="ECO:0000305" key="5"/>
<dbReference type="EMBL" id="X78898">
    <property type="protein sequence ID" value="CAA55514.1"/>
    <property type="molecule type" value="Genomic_DNA"/>
</dbReference>
<dbReference type="EMBL" id="Z71470">
    <property type="protein sequence ID" value="CAA96088.1"/>
    <property type="molecule type" value="Genomic_DNA"/>
</dbReference>
<dbReference type="EMBL" id="BK006947">
    <property type="protein sequence ID" value="DAA10359.1"/>
    <property type="molecule type" value="Genomic_DNA"/>
</dbReference>
<dbReference type="PIR" id="S50737">
    <property type="entry name" value="S50737"/>
</dbReference>
<dbReference type="RefSeq" id="NP_014205.1">
    <property type="nucleotide sequence ID" value="NM_001183032.1"/>
</dbReference>
<dbReference type="BioGRID" id="35639">
    <property type="interactions" value="89"/>
</dbReference>
<dbReference type="DIP" id="DIP-4465N"/>
<dbReference type="FunCoup" id="P40169">
    <property type="interactions" value="87"/>
</dbReference>
<dbReference type="IntAct" id="P40169">
    <property type="interactions" value="2"/>
</dbReference>
<dbReference type="MINT" id="P40169"/>
<dbReference type="STRING" id="4932.YNL194C"/>
<dbReference type="iPTMnet" id="P40169"/>
<dbReference type="PaxDb" id="4932-YNL194C"/>
<dbReference type="PeptideAtlas" id="P40169"/>
<dbReference type="EnsemblFungi" id="YNL194C_mRNA">
    <property type="protein sequence ID" value="YNL194C"/>
    <property type="gene ID" value="YNL194C"/>
</dbReference>
<dbReference type="GeneID" id="855527"/>
<dbReference type="KEGG" id="sce:YNL194C"/>
<dbReference type="AGR" id="SGD:S000005138"/>
<dbReference type="SGD" id="S000005138">
    <property type="gene designation" value="YNL194C"/>
</dbReference>
<dbReference type="VEuPathDB" id="FungiDB:YNL194C"/>
<dbReference type="eggNOG" id="ENOG502RKFF">
    <property type="taxonomic scope" value="Eukaryota"/>
</dbReference>
<dbReference type="GeneTree" id="ENSGT00940000176556"/>
<dbReference type="HOGENOM" id="CLU_059603_0_0_1"/>
<dbReference type="InParanoid" id="P40169"/>
<dbReference type="OMA" id="FPFHIIA"/>
<dbReference type="OrthoDB" id="5419460at2759"/>
<dbReference type="BioCyc" id="YEAST:G3O-33204-MONOMER"/>
<dbReference type="BioGRID-ORCS" id="855527">
    <property type="hits" value="0 hits in 10 CRISPR screens"/>
</dbReference>
<dbReference type="PRO" id="PR:P40169"/>
<dbReference type="Proteomes" id="UP000002311">
    <property type="component" value="Chromosome XIV"/>
</dbReference>
<dbReference type="RNAct" id="P40169">
    <property type="molecule type" value="protein"/>
</dbReference>
<dbReference type="GO" id="GO:0005938">
    <property type="term" value="C:cell cortex"/>
    <property type="evidence" value="ECO:0000314"/>
    <property type="project" value="SGD"/>
</dbReference>
<dbReference type="GO" id="GO:0071944">
    <property type="term" value="C:cell periphery"/>
    <property type="evidence" value="ECO:0007005"/>
    <property type="project" value="SGD"/>
</dbReference>
<dbReference type="GO" id="GO:0005737">
    <property type="term" value="C:cytoplasm"/>
    <property type="evidence" value="ECO:0007005"/>
    <property type="project" value="SGD"/>
</dbReference>
<dbReference type="GO" id="GO:0005783">
    <property type="term" value="C:endoplasmic reticulum"/>
    <property type="evidence" value="ECO:0007005"/>
    <property type="project" value="SGD"/>
</dbReference>
<dbReference type="GO" id="GO:0045121">
    <property type="term" value="C:membrane raft"/>
    <property type="evidence" value="ECO:0000318"/>
    <property type="project" value="GO_Central"/>
</dbReference>
<dbReference type="GO" id="GO:0005886">
    <property type="term" value="C:plasma membrane"/>
    <property type="evidence" value="ECO:0007005"/>
    <property type="project" value="SGD"/>
</dbReference>
<dbReference type="GO" id="GO:0030437">
    <property type="term" value="P:ascospore formation"/>
    <property type="evidence" value="ECO:0000315"/>
    <property type="project" value="SGD"/>
</dbReference>
<dbReference type="GO" id="GO:0030866">
    <property type="term" value="P:cortical actin cytoskeleton organization"/>
    <property type="evidence" value="ECO:0000318"/>
    <property type="project" value="GO_Central"/>
</dbReference>
<dbReference type="GO" id="GO:0006897">
    <property type="term" value="P:endocytosis"/>
    <property type="evidence" value="ECO:0000318"/>
    <property type="project" value="GO_Central"/>
</dbReference>
<dbReference type="GO" id="GO:0031505">
    <property type="term" value="P:fungal-type cell wall organization"/>
    <property type="evidence" value="ECO:0000318"/>
    <property type="project" value="GO_Central"/>
</dbReference>
<dbReference type="GO" id="GO:0032185">
    <property type="term" value="P:septin cytoskeleton organization"/>
    <property type="evidence" value="ECO:0000318"/>
    <property type="project" value="GO_Central"/>
</dbReference>
<dbReference type="InterPro" id="IPR009571">
    <property type="entry name" value="SUR7/Rim9-like_fungi"/>
</dbReference>
<dbReference type="PANTHER" id="PTHR36414">
    <property type="entry name" value="PROTEIN SUR7"/>
    <property type="match status" value="1"/>
</dbReference>
<dbReference type="PANTHER" id="PTHR36414:SF3">
    <property type="entry name" value="SUR7 FAMILY PROTEIN FMP45"/>
    <property type="match status" value="1"/>
</dbReference>
<dbReference type="Pfam" id="PF06687">
    <property type="entry name" value="SUR7"/>
    <property type="match status" value="1"/>
</dbReference>
<organism>
    <name type="scientific">Saccharomyces cerevisiae (strain ATCC 204508 / S288c)</name>
    <name type="common">Baker's yeast</name>
    <dbReference type="NCBI Taxonomy" id="559292"/>
    <lineage>
        <taxon>Eukaryota</taxon>
        <taxon>Fungi</taxon>
        <taxon>Dikarya</taxon>
        <taxon>Ascomycota</taxon>
        <taxon>Saccharomycotina</taxon>
        <taxon>Saccharomycetes</taxon>
        <taxon>Saccharomycetales</taxon>
        <taxon>Saccharomycetaceae</taxon>
        <taxon>Saccharomyces</taxon>
    </lineage>
</organism>
<name>YNT4_YEAST</name>
<feature type="chain" id="PRO_0000203399" description="Uncharacterized plasma membrane protein YNL194C">
    <location>
        <begin position="1"/>
        <end position="301"/>
    </location>
</feature>
<feature type="topological domain" description="Extracellular" evidence="1">
    <location>
        <begin position="1"/>
        <end position="5"/>
    </location>
</feature>
<feature type="transmembrane region" description="Helical" evidence="1">
    <location>
        <begin position="6"/>
        <end position="26"/>
    </location>
</feature>
<feature type="topological domain" description="Cytoplasmic" evidence="1">
    <location>
        <begin position="27"/>
        <end position="112"/>
    </location>
</feature>
<feature type="transmembrane region" description="Helical" evidence="1">
    <location>
        <begin position="113"/>
        <end position="133"/>
    </location>
</feature>
<feature type="topological domain" description="Extracellular" evidence="1">
    <location>
        <begin position="134"/>
        <end position="143"/>
    </location>
</feature>
<feature type="transmembrane region" description="Helical" evidence="1">
    <location>
        <begin position="144"/>
        <end position="164"/>
    </location>
</feature>
<feature type="topological domain" description="Cytoplasmic" evidence="1">
    <location>
        <begin position="165"/>
        <end position="191"/>
    </location>
</feature>
<feature type="transmembrane region" description="Helical" evidence="1">
    <location>
        <begin position="192"/>
        <end position="212"/>
    </location>
</feature>
<feature type="topological domain" description="Extracellular" evidence="1">
    <location>
        <begin position="213"/>
        <end position="301"/>
    </location>
</feature>
<feature type="region of interest" description="Disordered" evidence="2">
    <location>
        <begin position="254"/>
        <end position="301"/>
    </location>
</feature>
<feature type="compositionally biased region" description="Basic residues" evidence="2">
    <location>
        <begin position="261"/>
        <end position="275"/>
    </location>
</feature>
<feature type="compositionally biased region" description="Basic and acidic residues" evidence="2">
    <location>
        <begin position="282"/>
        <end position="292"/>
    </location>
</feature>
<gene>
    <name type="ordered locus">YNL194C</name>
    <name type="ORF">N1394</name>
</gene>
<protein>
    <recommendedName>
        <fullName>Uncharacterized plasma membrane protein YNL194C</fullName>
    </recommendedName>
</protein>
<keyword id="KW-1003">Cell membrane</keyword>
<keyword id="KW-0472">Membrane</keyword>
<keyword id="KW-1185">Reference proteome</keyword>
<keyword id="KW-0812">Transmembrane</keyword>
<keyword id="KW-1133">Transmembrane helix</keyword>
<comment type="function">
    <text evidence="3">Involved in sporulation and affects the sphingolipid composition of the plasma membrane.</text>
</comment>
<comment type="subcellular location">
    <subcellularLocation>
        <location evidence="3 4">Cell membrane</location>
        <topology evidence="3 4">Multi-pass membrane protein</topology>
    </subcellularLocation>
</comment>
<comment type="similarity">
    <text evidence="5">Belongs to the SUR7 family.</text>
</comment>
<accession>P40169</accession>
<accession>D6W0Z3</accession>